<comment type="function">
    <text evidence="1">Pole-localizer protein involved in the regulation of several cellular processes.</text>
</comment>
<comment type="subcellular location">
    <subcellularLocation>
        <location evidence="1">Cytoplasm</location>
    </subcellularLocation>
    <text evidence="1">Forms clusters that localize mainly near one pole of the cell.</text>
</comment>
<comment type="similarity">
    <text evidence="1">Belongs to the pole-localizer TmaR family.</text>
</comment>
<accession>B7UT45</accession>
<proteinExistence type="inferred from homology"/>
<keyword id="KW-0175">Coiled coil</keyword>
<keyword id="KW-0963">Cytoplasm</keyword>
<keyword id="KW-1185">Reference proteome</keyword>
<name>TMAR_ECO27</name>
<feature type="chain" id="PRO_1000147740" description="Pole-localizer protein TmaR">
    <location>
        <begin position="1"/>
        <end position="109"/>
    </location>
</feature>
<feature type="coiled-coil region" evidence="1">
    <location>
        <begin position="14"/>
        <end position="41"/>
    </location>
</feature>
<organism>
    <name type="scientific">Escherichia coli O127:H6 (strain E2348/69 / EPEC)</name>
    <dbReference type="NCBI Taxonomy" id="574521"/>
    <lineage>
        <taxon>Bacteria</taxon>
        <taxon>Pseudomonadati</taxon>
        <taxon>Pseudomonadota</taxon>
        <taxon>Gammaproteobacteria</taxon>
        <taxon>Enterobacterales</taxon>
        <taxon>Enterobacteriaceae</taxon>
        <taxon>Escherichia</taxon>
    </lineage>
</organism>
<reference key="1">
    <citation type="journal article" date="2009" name="J. Bacteriol.">
        <title>Complete genome sequence and comparative genome analysis of enteropathogenic Escherichia coli O127:H6 strain E2348/69.</title>
        <authorList>
            <person name="Iguchi A."/>
            <person name="Thomson N.R."/>
            <person name="Ogura Y."/>
            <person name="Saunders D."/>
            <person name="Ooka T."/>
            <person name="Henderson I.R."/>
            <person name="Harris D."/>
            <person name="Asadulghani M."/>
            <person name="Kurokawa K."/>
            <person name="Dean P."/>
            <person name="Kenny B."/>
            <person name="Quail M.A."/>
            <person name="Thurston S."/>
            <person name="Dougan G."/>
            <person name="Hayashi T."/>
            <person name="Parkhill J."/>
            <person name="Frankel G."/>
        </authorList>
    </citation>
    <scope>NUCLEOTIDE SEQUENCE [LARGE SCALE GENOMIC DNA]</scope>
    <source>
        <strain>E2348/69 / EPEC</strain>
    </source>
</reference>
<sequence length="109" mass="12778">METTKPSFQDVLEFVRLFRRKNKLQREIQDVEKKIRDNQKRVLLLDNLSDYIKPGMSVEAIQGIIASMKGDYEDRVDDYIIKNAELSKERRDISKKLKAMGEMKNGEAK</sequence>
<dbReference type="EMBL" id="FM180568">
    <property type="protein sequence ID" value="CAS09697.1"/>
    <property type="molecule type" value="Genomic_DNA"/>
</dbReference>
<dbReference type="RefSeq" id="WP_000450409.1">
    <property type="nucleotide sequence ID" value="NC_011601.1"/>
</dbReference>
<dbReference type="SMR" id="B7UT45"/>
<dbReference type="KEGG" id="ecg:E2348C_2149"/>
<dbReference type="HOGENOM" id="CLU_153146_0_0_6"/>
<dbReference type="Proteomes" id="UP000008205">
    <property type="component" value="Chromosome"/>
</dbReference>
<dbReference type="GO" id="GO:0005829">
    <property type="term" value="C:cytosol"/>
    <property type="evidence" value="ECO:0007669"/>
    <property type="project" value="TreeGrafter"/>
</dbReference>
<dbReference type="HAMAP" id="MF_00683">
    <property type="entry name" value="Pole_loc_TmaR"/>
    <property type="match status" value="1"/>
</dbReference>
<dbReference type="InterPro" id="IPR007458">
    <property type="entry name" value="DUF496"/>
</dbReference>
<dbReference type="InterPro" id="IPR053375">
    <property type="entry name" value="UPF0265"/>
</dbReference>
<dbReference type="NCBIfam" id="NF003844">
    <property type="entry name" value="PRK05423.1"/>
    <property type="match status" value="1"/>
</dbReference>
<dbReference type="NCBIfam" id="NF040881">
    <property type="entry name" value="PTS_reg_TmaR"/>
    <property type="match status" value="1"/>
</dbReference>
<dbReference type="PANTHER" id="PTHR39591">
    <property type="entry name" value="UPF0265 PROTEIN YEEX"/>
    <property type="match status" value="1"/>
</dbReference>
<dbReference type="PANTHER" id="PTHR39591:SF1">
    <property type="entry name" value="UPF0265 PROTEIN YEEX"/>
    <property type="match status" value="1"/>
</dbReference>
<dbReference type="Pfam" id="PF04363">
    <property type="entry name" value="DUF496"/>
    <property type="match status" value="1"/>
</dbReference>
<dbReference type="PIRSF" id="PIRSF028773">
    <property type="entry name" value="UCP028773"/>
    <property type="match status" value="1"/>
</dbReference>
<evidence type="ECO:0000255" key="1">
    <source>
        <dbReference type="HAMAP-Rule" id="MF_00683"/>
    </source>
</evidence>
<protein>
    <recommendedName>
        <fullName evidence="1">Pole-localizer protein TmaR</fullName>
    </recommendedName>
</protein>
<gene>
    <name evidence="1" type="primary">tmaR</name>
    <name type="ordered locus">E2348C_2149</name>
</gene>